<accession>P84637</accession>
<feature type="peptide" id="PRO_0000044697" description="Cycloviolin-A" evidence="2 3">
    <location>
        <begin position="1"/>
        <end position="31"/>
    </location>
</feature>
<feature type="disulfide bond" evidence="1 2">
    <location>
        <begin position="5"/>
        <end position="21"/>
    </location>
</feature>
<feature type="disulfide bond" evidence="1 2">
    <location>
        <begin position="9"/>
        <end position="23"/>
    </location>
</feature>
<feature type="disulfide bond" evidence="1 2">
    <location>
        <begin position="14"/>
        <end position="28"/>
    </location>
</feature>
<feature type="cross-link" description="Cyclopeptide (Gly-Asn)" evidence="3">
    <location>
        <begin position="1"/>
        <end position="31"/>
    </location>
</feature>
<organism>
    <name type="scientific">Leonia cymosa</name>
    <name type="common">Sacha uba</name>
    <dbReference type="NCBI Taxonomy" id="341676"/>
    <lineage>
        <taxon>Eukaryota</taxon>
        <taxon>Viridiplantae</taxon>
        <taxon>Streptophyta</taxon>
        <taxon>Embryophyta</taxon>
        <taxon>Tracheophyta</taxon>
        <taxon>Spermatophyta</taxon>
        <taxon>Magnoliopsida</taxon>
        <taxon>eudicotyledons</taxon>
        <taxon>Gunneridae</taxon>
        <taxon>Pentapetalae</taxon>
        <taxon>rosids</taxon>
        <taxon>fabids</taxon>
        <taxon>Malpighiales</taxon>
        <taxon>Violaceae</taxon>
        <taxon>Leonia</taxon>
    </lineage>
</organism>
<reference evidence="4" key="1">
    <citation type="journal article" date="2000" name="J. Org. Chem.">
        <title>Cycloviolins A-D, anti-HIV macrocyclic peptides from Leonia cymosa.</title>
        <authorList>
            <person name="Hallock Y.F."/>
            <person name="Sowder R.C. II"/>
            <person name="Pannell L.K."/>
            <person name="Hughes C.B."/>
            <person name="Johnson D.G."/>
            <person name="Gulakowski R."/>
            <person name="Cardellina J.H. Jr."/>
            <person name="Boyd M.R."/>
        </authorList>
    </citation>
    <scope>PROTEIN SEQUENCE</scope>
    <scope>FUNCTION</scope>
    <scope>MASS SPECTROMETRY</scope>
    <source>
        <strain evidence="3">Q65T-5650</strain>
        <tissue evidence="3">Bark</tissue>
    </source>
</reference>
<protein>
    <recommendedName>
        <fullName>Cycloviolin-A</fullName>
    </recommendedName>
</protein>
<sequence>GVIPCGESCVFIPCISAAIGCSCKNKVCYRN</sequence>
<dbReference type="SMR" id="P84637"/>
<dbReference type="GO" id="GO:0006952">
    <property type="term" value="P:defense response"/>
    <property type="evidence" value="ECO:0000314"/>
    <property type="project" value="UniProtKB"/>
</dbReference>
<dbReference type="GO" id="GO:0050688">
    <property type="term" value="P:regulation of defense response to virus"/>
    <property type="evidence" value="ECO:0007669"/>
    <property type="project" value="UniProtKB-KW"/>
</dbReference>
<dbReference type="InterPro" id="IPR005535">
    <property type="entry name" value="Cyclotide"/>
</dbReference>
<dbReference type="InterPro" id="IPR012323">
    <property type="entry name" value="Cyclotide_bracelet_CS"/>
</dbReference>
<dbReference type="InterPro" id="IPR036146">
    <property type="entry name" value="Cyclotide_sf"/>
</dbReference>
<dbReference type="Pfam" id="PF03784">
    <property type="entry name" value="Cyclotide"/>
    <property type="match status" value="1"/>
</dbReference>
<dbReference type="PIRSF" id="PIRSF037891">
    <property type="entry name" value="Cycloviolacin"/>
    <property type="match status" value="1"/>
</dbReference>
<dbReference type="SUPFAM" id="SSF57038">
    <property type="entry name" value="Cyclotides"/>
    <property type="match status" value="1"/>
</dbReference>
<dbReference type="PROSITE" id="PS51052">
    <property type="entry name" value="CYCLOTIDE"/>
    <property type="match status" value="1"/>
</dbReference>
<dbReference type="PROSITE" id="PS60008">
    <property type="entry name" value="CYCLOTIDE_BRACELET"/>
    <property type="match status" value="1"/>
</dbReference>
<comment type="function">
    <text evidence="2 3 4">Probably participates in a plant defense mechanism. Has anti-HIV activity.</text>
</comment>
<comment type="domain">
    <text evidence="1">The presence of a 'disulfide through disulfide knot' structurally defines this protein as a knottin.</text>
</comment>
<comment type="PTM">
    <text evidence="2 3">This is a cyclic peptide.</text>
</comment>
<comment type="mass spectrometry"/>
<comment type="similarity">
    <text evidence="2">Belongs to the cyclotide family. Bracelet subfamily.</text>
</comment>
<comment type="caution">
    <text evidence="4">This peptide is cyclic. The start position was chosen by similarity to OAK1 (kalata-B1) for which the DNA sequence is known.</text>
</comment>
<name>CYVA_LEOCM</name>
<proteinExistence type="evidence at protein level"/>
<keyword id="KW-0930">Antiviral protein</keyword>
<keyword id="KW-0903">Direct protein sequencing</keyword>
<keyword id="KW-1015">Disulfide bond</keyword>
<keyword id="KW-0960">Knottin</keyword>
<keyword id="KW-0611">Plant defense</keyword>
<evidence type="ECO:0000250" key="1">
    <source>
        <dbReference type="UniProtKB" id="P56879"/>
    </source>
</evidence>
<evidence type="ECO:0000255" key="2">
    <source>
        <dbReference type="PROSITE-ProRule" id="PRU00395"/>
    </source>
</evidence>
<evidence type="ECO:0000269" key="3">
    <source>
    </source>
</evidence>
<evidence type="ECO:0000305" key="4"/>